<sequence length="91" mass="10245">MSRSLKKGPFIADHLLKKIEALNAKNEKQVIKTWSRSSTIIPDMVGHTIAVHNGRQHVPVFISDQMVGHKLGEFAPTRTYRGHGSDKKSKR</sequence>
<gene>
    <name evidence="1" type="primary">rpsS</name>
    <name evidence="1" type="synonym">rps19</name>
    <name type="ordered locus">Tery_3008</name>
</gene>
<feature type="chain" id="PRO_0000265461" description="Small ribosomal subunit protein uS19">
    <location>
        <begin position="1"/>
        <end position="91"/>
    </location>
</feature>
<organism>
    <name type="scientific">Trichodesmium erythraeum (strain IMS101)</name>
    <dbReference type="NCBI Taxonomy" id="203124"/>
    <lineage>
        <taxon>Bacteria</taxon>
        <taxon>Bacillati</taxon>
        <taxon>Cyanobacteriota</taxon>
        <taxon>Cyanophyceae</taxon>
        <taxon>Oscillatoriophycideae</taxon>
        <taxon>Oscillatoriales</taxon>
        <taxon>Microcoleaceae</taxon>
        <taxon>Trichodesmium</taxon>
    </lineage>
</organism>
<evidence type="ECO:0000255" key="1">
    <source>
        <dbReference type="HAMAP-Rule" id="MF_00531"/>
    </source>
</evidence>
<evidence type="ECO:0000305" key="2"/>
<name>RS19_TRIEI</name>
<accession>Q110B1</accession>
<keyword id="KW-0687">Ribonucleoprotein</keyword>
<keyword id="KW-0689">Ribosomal protein</keyword>
<keyword id="KW-0694">RNA-binding</keyword>
<keyword id="KW-0699">rRNA-binding</keyword>
<dbReference type="EMBL" id="CP000393">
    <property type="protein sequence ID" value="ABG52163.1"/>
    <property type="molecule type" value="Genomic_DNA"/>
</dbReference>
<dbReference type="RefSeq" id="WP_011612518.1">
    <property type="nucleotide sequence ID" value="NC_008312.1"/>
</dbReference>
<dbReference type="SMR" id="Q110B1"/>
<dbReference type="STRING" id="203124.Tery_3008"/>
<dbReference type="KEGG" id="ter:Tery_3008"/>
<dbReference type="eggNOG" id="COG0185">
    <property type="taxonomic scope" value="Bacteria"/>
</dbReference>
<dbReference type="HOGENOM" id="CLU_144911_0_1_3"/>
<dbReference type="OrthoDB" id="9797833at2"/>
<dbReference type="GO" id="GO:0005737">
    <property type="term" value="C:cytoplasm"/>
    <property type="evidence" value="ECO:0007669"/>
    <property type="project" value="UniProtKB-ARBA"/>
</dbReference>
<dbReference type="GO" id="GO:0015935">
    <property type="term" value="C:small ribosomal subunit"/>
    <property type="evidence" value="ECO:0007669"/>
    <property type="project" value="InterPro"/>
</dbReference>
<dbReference type="GO" id="GO:0019843">
    <property type="term" value="F:rRNA binding"/>
    <property type="evidence" value="ECO:0007669"/>
    <property type="project" value="UniProtKB-UniRule"/>
</dbReference>
<dbReference type="GO" id="GO:0003735">
    <property type="term" value="F:structural constituent of ribosome"/>
    <property type="evidence" value="ECO:0007669"/>
    <property type="project" value="InterPro"/>
</dbReference>
<dbReference type="GO" id="GO:0000028">
    <property type="term" value="P:ribosomal small subunit assembly"/>
    <property type="evidence" value="ECO:0007669"/>
    <property type="project" value="TreeGrafter"/>
</dbReference>
<dbReference type="GO" id="GO:0006412">
    <property type="term" value="P:translation"/>
    <property type="evidence" value="ECO:0007669"/>
    <property type="project" value="UniProtKB-UniRule"/>
</dbReference>
<dbReference type="FunFam" id="3.30.860.10:FF:000001">
    <property type="entry name" value="30S ribosomal protein S19"/>
    <property type="match status" value="1"/>
</dbReference>
<dbReference type="Gene3D" id="3.30.860.10">
    <property type="entry name" value="30s Ribosomal Protein S19, Chain A"/>
    <property type="match status" value="1"/>
</dbReference>
<dbReference type="HAMAP" id="MF_00531">
    <property type="entry name" value="Ribosomal_uS19"/>
    <property type="match status" value="1"/>
</dbReference>
<dbReference type="InterPro" id="IPR002222">
    <property type="entry name" value="Ribosomal_uS19"/>
</dbReference>
<dbReference type="InterPro" id="IPR005732">
    <property type="entry name" value="Ribosomal_uS19_bac-type"/>
</dbReference>
<dbReference type="InterPro" id="IPR020934">
    <property type="entry name" value="Ribosomal_uS19_CS"/>
</dbReference>
<dbReference type="InterPro" id="IPR023575">
    <property type="entry name" value="Ribosomal_uS19_SF"/>
</dbReference>
<dbReference type="NCBIfam" id="TIGR01050">
    <property type="entry name" value="rpsS_bact"/>
    <property type="match status" value="1"/>
</dbReference>
<dbReference type="PANTHER" id="PTHR11880">
    <property type="entry name" value="RIBOSOMAL PROTEIN S19P FAMILY MEMBER"/>
    <property type="match status" value="1"/>
</dbReference>
<dbReference type="PANTHER" id="PTHR11880:SF8">
    <property type="entry name" value="SMALL RIBOSOMAL SUBUNIT PROTEIN US19M"/>
    <property type="match status" value="1"/>
</dbReference>
<dbReference type="Pfam" id="PF00203">
    <property type="entry name" value="Ribosomal_S19"/>
    <property type="match status" value="1"/>
</dbReference>
<dbReference type="PIRSF" id="PIRSF002144">
    <property type="entry name" value="Ribosomal_S19"/>
    <property type="match status" value="1"/>
</dbReference>
<dbReference type="PRINTS" id="PR00975">
    <property type="entry name" value="RIBOSOMALS19"/>
</dbReference>
<dbReference type="SUPFAM" id="SSF54570">
    <property type="entry name" value="Ribosomal protein S19"/>
    <property type="match status" value="1"/>
</dbReference>
<dbReference type="PROSITE" id="PS00323">
    <property type="entry name" value="RIBOSOMAL_S19"/>
    <property type="match status" value="1"/>
</dbReference>
<protein>
    <recommendedName>
        <fullName evidence="1">Small ribosomal subunit protein uS19</fullName>
    </recommendedName>
    <alternativeName>
        <fullName evidence="2">30S ribosomal protein S19</fullName>
    </alternativeName>
</protein>
<proteinExistence type="inferred from homology"/>
<reference key="1">
    <citation type="journal article" date="2015" name="Proc. Natl. Acad. Sci. U.S.A.">
        <title>Trichodesmium genome maintains abundant, widespread noncoding DNA in situ, despite oligotrophic lifestyle.</title>
        <authorList>
            <person name="Walworth N."/>
            <person name="Pfreundt U."/>
            <person name="Nelson W.C."/>
            <person name="Mincer T."/>
            <person name="Heidelberg J.F."/>
            <person name="Fu F."/>
            <person name="Waterbury J.B."/>
            <person name="Glavina del Rio T."/>
            <person name="Goodwin L."/>
            <person name="Kyrpides N.C."/>
            <person name="Land M.L."/>
            <person name="Woyke T."/>
            <person name="Hutchins D.A."/>
            <person name="Hess W.R."/>
            <person name="Webb E.A."/>
        </authorList>
    </citation>
    <scope>NUCLEOTIDE SEQUENCE [LARGE SCALE GENOMIC DNA]</scope>
    <source>
        <strain>IMS101</strain>
    </source>
</reference>
<comment type="function">
    <text evidence="1">Protein S19 forms a complex with S13 that binds strongly to the 16S ribosomal RNA.</text>
</comment>
<comment type="similarity">
    <text evidence="1">Belongs to the universal ribosomal protein uS19 family.</text>
</comment>